<name>UREF_MYCBT</name>
<comment type="function">
    <text evidence="1">Required for maturation of urease via the functional incorporation of the urease nickel metallocenter.</text>
</comment>
<comment type="subunit">
    <text evidence="1">UreD, UreF and UreG form a complex that acts as a GTP-hydrolysis-dependent molecular chaperone, activating the urease apoprotein by helping to assemble the nickel containing metallocenter of UreC. The UreE protein probably delivers the nickel.</text>
</comment>
<comment type="subcellular location">
    <subcellularLocation>
        <location evidence="1">Cytoplasm</location>
    </subcellularLocation>
</comment>
<comment type="similarity">
    <text evidence="1">Belongs to the UreF family.</text>
</comment>
<evidence type="ECO:0000255" key="1">
    <source>
        <dbReference type="HAMAP-Rule" id="MF_01385"/>
    </source>
</evidence>
<evidence type="ECO:0000256" key="2">
    <source>
        <dbReference type="SAM" id="MobiDB-lite"/>
    </source>
</evidence>
<protein>
    <recommendedName>
        <fullName evidence="1">Urease accessory protein UreF</fullName>
    </recommendedName>
</protein>
<gene>
    <name evidence="1" type="primary">ureF</name>
    <name type="ordered locus">JTY_1871</name>
</gene>
<dbReference type="EMBL" id="AP010918">
    <property type="protein sequence ID" value="BAH26157.1"/>
    <property type="molecule type" value="Genomic_DNA"/>
</dbReference>
<dbReference type="RefSeq" id="WP_010950619.1">
    <property type="nucleotide sequence ID" value="NZ_CP014566.1"/>
</dbReference>
<dbReference type="SMR" id="C1APC8"/>
<dbReference type="KEGG" id="mbt:JTY_1871"/>
<dbReference type="HOGENOM" id="CLU_049215_3_0_11"/>
<dbReference type="GO" id="GO:0005737">
    <property type="term" value="C:cytoplasm"/>
    <property type="evidence" value="ECO:0007669"/>
    <property type="project" value="UniProtKB-SubCell"/>
</dbReference>
<dbReference type="GO" id="GO:0016151">
    <property type="term" value="F:nickel cation binding"/>
    <property type="evidence" value="ECO:0007669"/>
    <property type="project" value="UniProtKB-UniRule"/>
</dbReference>
<dbReference type="Gene3D" id="1.10.4190.10">
    <property type="entry name" value="Urease accessory protein UreF"/>
    <property type="match status" value="1"/>
</dbReference>
<dbReference type="HAMAP" id="MF_01385">
    <property type="entry name" value="UreF"/>
    <property type="match status" value="1"/>
</dbReference>
<dbReference type="InterPro" id="IPR002639">
    <property type="entry name" value="UreF"/>
</dbReference>
<dbReference type="InterPro" id="IPR038277">
    <property type="entry name" value="UreF_sf"/>
</dbReference>
<dbReference type="PANTHER" id="PTHR33620">
    <property type="entry name" value="UREASE ACCESSORY PROTEIN F"/>
    <property type="match status" value="1"/>
</dbReference>
<dbReference type="PANTHER" id="PTHR33620:SF1">
    <property type="entry name" value="UREASE ACCESSORY PROTEIN F"/>
    <property type="match status" value="1"/>
</dbReference>
<dbReference type="Pfam" id="PF01730">
    <property type="entry name" value="UreF"/>
    <property type="match status" value="1"/>
</dbReference>
<dbReference type="PIRSF" id="PIRSF009467">
    <property type="entry name" value="Ureas_acces_UreF"/>
    <property type="match status" value="1"/>
</dbReference>
<reference key="1">
    <citation type="journal article" date="2009" name="Vaccine">
        <title>Whole genome sequence analysis of Mycobacterium bovis bacillus Calmette-Guerin (BCG) Tokyo 172: a comparative study of BCG vaccine substrains.</title>
        <authorList>
            <person name="Seki M."/>
            <person name="Honda I."/>
            <person name="Fujita I."/>
            <person name="Yano I."/>
            <person name="Yamamoto S."/>
            <person name="Koyama A."/>
        </authorList>
    </citation>
    <scope>NUCLEOTIDE SEQUENCE [LARGE SCALE GENOMIC DNA]</scope>
    <source>
        <strain>BCG / Tokyo 172 / ATCC 35737 / TMC 1019</strain>
    </source>
</reference>
<sequence>MTSLAVLLTLADSRLPTGAHVHSGGIEEAIAAGLVTGLATLEAFLKRRVRTHGLLTASIAAAVHRGELAVDDADRETDARTPAPAARHASRSQGRGLIRLARRVWPDSGWEELGPRPHLAVVAGRVGALSGLAPEHNALHLVYITMTGSAIAAQRLLALDPAEVTVVTFQLSELCEQIAQEATAGLADLSDPLLDTLAQRHDERVRPLFVS</sequence>
<accession>C1APC8</accession>
<proteinExistence type="inferred from homology"/>
<organism>
    <name type="scientific">Mycobacterium bovis (strain BCG / Tokyo 172 / ATCC 35737 / TMC 1019)</name>
    <dbReference type="NCBI Taxonomy" id="561275"/>
    <lineage>
        <taxon>Bacteria</taxon>
        <taxon>Bacillati</taxon>
        <taxon>Actinomycetota</taxon>
        <taxon>Actinomycetes</taxon>
        <taxon>Mycobacteriales</taxon>
        <taxon>Mycobacteriaceae</taxon>
        <taxon>Mycobacterium</taxon>
        <taxon>Mycobacterium tuberculosis complex</taxon>
    </lineage>
</organism>
<keyword id="KW-0143">Chaperone</keyword>
<keyword id="KW-0963">Cytoplasm</keyword>
<keyword id="KW-0996">Nickel insertion</keyword>
<feature type="chain" id="PRO_1000184257" description="Urease accessory protein UreF">
    <location>
        <begin position="1"/>
        <end position="211"/>
    </location>
</feature>
<feature type="region of interest" description="Disordered" evidence="2">
    <location>
        <begin position="71"/>
        <end position="93"/>
    </location>
</feature>